<keyword id="KW-0067">ATP-binding</keyword>
<keyword id="KW-0150">Chloroplast</keyword>
<keyword id="KW-0547">Nucleotide-binding</keyword>
<keyword id="KW-0597">Phosphoprotein</keyword>
<keyword id="KW-0934">Plastid</keyword>
<keyword id="KW-1185">Reference proteome</keyword>
<keyword id="KW-0809">Transit peptide</keyword>
<protein>
    <recommendedName>
        <fullName evidence="6">Universal stress protein PHOS32</fullName>
    </recommendedName>
    <alternativeName>
        <fullName evidence="7">Phosphorylated protein of 32 kDa</fullName>
        <shortName evidence="7">AtPHOS32</shortName>
    </alternativeName>
</protein>
<dbReference type="EMBL" id="AB026634">
    <property type="protein sequence ID" value="BAA97516.1"/>
    <property type="status" value="ALT_SEQ"/>
    <property type="molecule type" value="Genomic_DNA"/>
</dbReference>
<dbReference type="EMBL" id="CP002688">
    <property type="protein sequence ID" value="AED96495.1"/>
    <property type="molecule type" value="Genomic_DNA"/>
</dbReference>
<dbReference type="EMBL" id="CP002688">
    <property type="protein sequence ID" value="ANM70952.1"/>
    <property type="molecule type" value="Genomic_DNA"/>
</dbReference>
<dbReference type="EMBL" id="AK118526">
    <property type="protein sequence ID" value="BAC43129.1"/>
    <property type="molecule type" value="mRNA"/>
</dbReference>
<dbReference type="EMBL" id="AY070394">
    <property type="protein sequence ID" value="AAL49890.1"/>
    <property type="molecule type" value="mRNA"/>
</dbReference>
<dbReference type="EMBL" id="AY123025">
    <property type="protein sequence ID" value="AAM67558.1"/>
    <property type="molecule type" value="mRNA"/>
</dbReference>
<dbReference type="EMBL" id="AY087680">
    <property type="protein sequence ID" value="AAM65217.1"/>
    <property type="molecule type" value="mRNA"/>
</dbReference>
<dbReference type="RefSeq" id="NP_001332519.1">
    <property type="nucleotide sequence ID" value="NM_001345084.1"/>
</dbReference>
<dbReference type="RefSeq" id="NP_001332520.1">
    <property type="nucleotide sequence ID" value="NM_001345085.1"/>
</dbReference>
<dbReference type="RefSeq" id="NP_001332521.1">
    <property type="nucleotide sequence ID" value="NM_001345082.1"/>
</dbReference>
<dbReference type="RefSeq" id="NP_568808.1">
    <property type="nucleotide sequence ID" value="NM_124823.4"/>
</dbReference>
<dbReference type="SMR" id="Q8VYN9"/>
<dbReference type="FunCoup" id="Q8VYN9">
    <property type="interactions" value="620"/>
</dbReference>
<dbReference type="STRING" id="3702.Q8VYN9"/>
<dbReference type="GlyGen" id="Q8VYN9">
    <property type="glycosylation" value="2 sites"/>
</dbReference>
<dbReference type="iPTMnet" id="Q8VYN9"/>
<dbReference type="PaxDb" id="3702-AT5G54430.1"/>
<dbReference type="ProteomicsDB" id="236154"/>
<dbReference type="EnsemblPlants" id="AT5G54430.1">
    <property type="protein sequence ID" value="AT5G54430.1"/>
    <property type="gene ID" value="AT5G54430"/>
</dbReference>
<dbReference type="EnsemblPlants" id="AT5G54430.4">
    <property type="protein sequence ID" value="AT5G54430.4"/>
    <property type="gene ID" value="AT5G54430"/>
</dbReference>
<dbReference type="GeneID" id="835531"/>
<dbReference type="Gramene" id="AT5G54430.1">
    <property type="protein sequence ID" value="AT5G54430.1"/>
    <property type="gene ID" value="AT5G54430"/>
</dbReference>
<dbReference type="Gramene" id="AT5G54430.4">
    <property type="protein sequence ID" value="AT5G54430.4"/>
    <property type="gene ID" value="AT5G54430"/>
</dbReference>
<dbReference type="KEGG" id="ath:AT5G54430"/>
<dbReference type="Araport" id="AT5G54430"/>
<dbReference type="TAIR" id="AT5G54430">
    <property type="gene designation" value="PHOS32"/>
</dbReference>
<dbReference type="eggNOG" id="ENOG502RXH2">
    <property type="taxonomic scope" value="Eukaryota"/>
</dbReference>
<dbReference type="HOGENOM" id="CLU_049301_0_0_1"/>
<dbReference type="InParanoid" id="Q8VYN9"/>
<dbReference type="OMA" id="HEHIKDG"/>
<dbReference type="OrthoDB" id="843225at2759"/>
<dbReference type="PhylomeDB" id="Q8VYN9"/>
<dbReference type="PRO" id="PR:Q8VYN9"/>
<dbReference type="Proteomes" id="UP000006548">
    <property type="component" value="Chromosome 5"/>
</dbReference>
<dbReference type="ExpressionAtlas" id="Q8VYN9">
    <property type="expression patterns" value="baseline and differential"/>
</dbReference>
<dbReference type="GO" id="GO:0009507">
    <property type="term" value="C:chloroplast"/>
    <property type="evidence" value="ECO:0007005"/>
    <property type="project" value="TAIR"/>
</dbReference>
<dbReference type="GO" id="GO:0009536">
    <property type="term" value="C:plastid"/>
    <property type="evidence" value="ECO:0007005"/>
    <property type="project" value="TAIR"/>
</dbReference>
<dbReference type="GO" id="GO:0005524">
    <property type="term" value="F:ATP binding"/>
    <property type="evidence" value="ECO:0007669"/>
    <property type="project" value="UniProtKB-KW"/>
</dbReference>
<dbReference type="GO" id="GO:0002238">
    <property type="term" value="P:response to molecule of fungal origin"/>
    <property type="evidence" value="ECO:0000314"/>
    <property type="project" value="TAIR"/>
</dbReference>
<dbReference type="CDD" id="cd23659">
    <property type="entry name" value="USP_At3g01520-like"/>
    <property type="match status" value="1"/>
</dbReference>
<dbReference type="FunFam" id="3.40.50.620:FF:000201">
    <property type="entry name" value="Universal stress protein PHOS34"/>
    <property type="match status" value="1"/>
</dbReference>
<dbReference type="Gene3D" id="3.40.50.620">
    <property type="entry name" value="HUPs"/>
    <property type="match status" value="1"/>
</dbReference>
<dbReference type="InterPro" id="IPR044162">
    <property type="entry name" value="PHOS32/34"/>
</dbReference>
<dbReference type="InterPro" id="IPR014729">
    <property type="entry name" value="Rossmann-like_a/b/a_fold"/>
</dbReference>
<dbReference type="InterPro" id="IPR006015">
    <property type="entry name" value="Universal_stress_UspA"/>
</dbReference>
<dbReference type="InterPro" id="IPR006016">
    <property type="entry name" value="UspA"/>
</dbReference>
<dbReference type="PANTHER" id="PTHR31966">
    <property type="entry name" value="OS01G0783500 PROTEIN"/>
    <property type="match status" value="1"/>
</dbReference>
<dbReference type="PANTHER" id="PTHR31966:SF18">
    <property type="entry name" value="UNIVERSAL STRESS PROTEIN PHOS32"/>
    <property type="match status" value="1"/>
</dbReference>
<dbReference type="Pfam" id="PF00582">
    <property type="entry name" value="Usp"/>
    <property type="match status" value="1"/>
</dbReference>
<dbReference type="PRINTS" id="PR01438">
    <property type="entry name" value="UNVRSLSTRESS"/>
</dbReference>
<dbReference type="SUPFAM" id="SSF52402">
    <property type="entry name" value="Adenine nucleotide alpha hydrolases-like"/>
    <property type="match status" value="1"/>
</dbReference>
<evidence type="ECO:0000250" key="1">
    <source>
        <dbReference type="UniProtKB" id="Q57997"/>
    </source>
</evidence>
<evidence type="ECO:0000255" key="2"/>
<evidence type="ECO:0000256" key="3">
    <source>
        <dbReference type="SAM" id="MobiDB-lite"/>
    </source>
</evidence>
<evidence type="ECO:0000269" key="4">
    <source>
    </source>
</evidence>
<evidence type="ECO:0000269" key="5">
    <source>
    </source>
</evidence>
<evidence type="ECO:0000303" key="6">
    <source>
    </source>
</evidence>
<evidence type="ECO:0000303" key="7">
    <source>
    </source>
</evidence>
<evidence type="ECO:0000305" key="8"/>
<evidence type="ECO:0000312" key="9">
    <source>
        <dbReference type="Araport" id="AT5G54430"/>
    </source>
</evidence>
<evidence type="ECO:0000312" key="10">
    <source>
        <dbReference type="EMBL" id="AAL49890.1"/>
    </source>
</evidence>
<evidence type="ECO:0000312" key="11">
    <source>
        <dbReference type="EMBL" id="BAA97516.1"/>
    </source>
</evidence>
<evidence type="ECO:0007744" key="12">
    <source>
    </source>
</evidence>
<evidence type="ECO:0007744" key="13">
    <source>
    </source>
</evidence>
<accession>Q8VYN9</accession>
<accession>Q9LSR2</accession>
<gene>
    <name evidence="7" type="primary">PHOS32</name>
    <name evidence="9" type="ordered locus">At5g54430</name>
    <name evidence="11" type="ORF">F24B18.5</name>
</gene>
<feature type="transit peptide" description="Chloroplast" evidence="2">
    <location>
        <begin position="1"/>
        <end position="43"/>
    </location>
</feature>
<feature type="chain" id="PRO_0000436334" description="Universal stress protein PHOS32">
    <location>
        <begin position="44"/>
        <end position="242"/>
    </location>
</feature>
<feature type="region of interest" description="Disordered" evidence="3">
    <location>
        <begin position="1"/>
        <end position="45"/>
    </location>
</feature>
<feature type="compositionally biased region" description="Basic residues" evidence="3">
    <location>
        <begin position="15"/>
        <end position="30"/>
    </location>
</feature>
<feature type="compositionally biased region" description="Low complexity" evidence="3">
    <location>
        <begin position="31"/>
        <end position="44"/>
    </location>
</feature>
<feature type="binding site" evidence="1">
    <location>
        <position position="19"/>
    </location>
    <ligand>
        <name>ATP</name>
        <dbReference type="ChEBI" id="CHEBI:30616"/>
    </ligand>
</feature>
<feature type="binding site" evidence="1">
    <location>
        <position position="83"/>
    </location>
    <ligand>
        <name>ATP</name>
        <dbReference type="ChEBI" id="CHEBI:30616"/>
    </ligand>
</feature>
<feature type="binding site" evidence="1">
    <location>
        <begin position="168"/>
        <end position="178"/>
    </location>
    <ligand>
        <name>ATP</name>
        <dbReference type="ChEBI" id="CHEBI:30616"/>
    </ligand>
</feature>
<feature type="binding site" evidence="1">
    <location>
        <begin position="186"/>
        <end position="188"/>
    </location>
    <ligand>
        <name>ATP</name>
        <dbReference type="ChEBI" id="CHEBI:30616"/>
    </ligand>
</feature>
<feature type="modified residue" description="Phosphoserine; by MAPK3 and MAPK6" evidence="4 5 12 13">
    <location>
        <position position="21"/>
    </location>
</feature>
<feature type="modified residue" description="Phosphoserine" evidence="12">
    <location>
        <position position="219"/>
    </location>
</feature>
<feature type="mutagenesis site" description="Impaired phosphorylation by MAPK3 and MAPK6." evidence="4">
    <original>S</original>
    <variation>A</variation>
    <variation>D</variation>
    <location>
        <position position="21"/>
    </location>
</feature>
<organism evidence="10">
    <name type="scientific">Arabidopsis thaliana</name>
    <name type="common">Mouse-ear cress</name>
    <dbReference type="NCBI Taxonomy" id="3702"/>
    <lineage>
        <taxon>Eukaryota</taxon>
        <taxon>Viridiplantae</taxon>
        <taxon>Streptophyta</taxon>
        <taxon>Embryophyta</taxon>
        <taxon>Tracheophyta</taxon>
        <taxon>Spermatophyta</taxon>
        <taxon>Magnoliopsida</taxon>
        <taxon>eudicotyledons</taxon>
        <taxon>Gunneridae</taxon>
        <taxon>Pentapetalae</taxon>
        <taxon>rosids</taxon>
        <taxon>malvids</taxon>
        <taxon>Brassicales</taxon>
        <taxon>Brassicaceae</taxon>
        <taxon>Camelineae</taxon>
        <taxon>Arabidopsis</taxon>
    </lineage>
</organism>
<comment type="subcellular location">
    <subcellularLocation>
        <location evidence="2">Plastid</location>
        <location evidence="2">Chloroplast</location>
    </subcellularLocation>
</comment>
<comment type="PTM">
    <text evidence="4 5">Phosphorylated by MAPK3 and MAPK6 after pathogenic elicitation (e.g. bacterial flg22, Phytophthora infestans zoospores and xylanase).</text>
</comment>
<comment type="miscellaneous">
    <text evidence="4">Can bind nickel.</text>
</comment>
<comment type="similarity">
    <text evidence="8">Belongs to the universal stress protein A family.</text>
</comment>
<comment type="sequence caution" evidence="8">
    <conflict type="erroneous gene model prediction">
        <sequence resource="EMBL-CDS" id="BAA97516"/>
    </conflict>
</comment>
<reference key="1">
    <citation type="submission" date="1999-04" db="EMBL/GenBank/DDBJ databases">
        <title>Structural analysis of Arabidopsis thaliana chromosome 5. XI.</title>
        <authorList>
            <person name="Kaneko T."/>
            <person name="Katoh T."/>
            <person name="Asamizu E."/>
            <person name="Sato S."/>
            <person name="Nakamura Y."/>
            <person name="Kotani H."/>
            <person name="Tabata S."/>
        </authorList>
    </citation>
    <scope>NUCLEOTIDE SEQUENCE [LARGE SCALE GENOMIC DNA]</scope>
    <source>
        <strain>cv. Columbia</strain>
    </source>
</reference>
<reference key="2">
    <citation type="journal article" date="2017" name="Plant J.">
        <title>Araport11: a complete reannotation of the Arabidopsis thaliana reference genome.</title>
        <authorList>
            <person name="Cheng C.Y."/>
            <person name="Krishnakumar V."/>
            <person name="Chan A.P."/>
            <person name="Thibaud-Nissen F."/>
            <person name="Schobel S."/>
            <person name="Town C.D."/>
        </authorList>
    </citation>
    <scope>GENOME REANNOTATION</scope>
    <source>
        <strain>cv. Columbia</strain>
    </source>
</reference>
<reference key="3">
    <citation type="journal article" date="2002" name="Science">
        <title>Functional annotation of a full-length Arabidopsis cDNA collection.</title>
        <authorList>
            <person name="Seki M."/>
            <person name="Narusaka M."/>
            <person name="Kamiya A."/>
            <person name="Ishida J."/>
            <person name="Satou M."/>
            <person name="Sakurai T."/>
            <person name="Nakajima M."/>
            <person name="Enju A."/>
            <person name="Akiyama K."/>
            <person name="Oono Y."/>
            <person name="Muramatsu M."/>
            <person name="Hayashizaki Y."/>
            <person name="Kawai J."/>
            <person name="Carninci P."/>
            <person name="Itoh M."/>
            <person name="Ishii Y."/>
            <person name="Arakawa T."/>
            <person name="Shibata K."/>
            <person name="Shinagawa A."/>
            <person name="Shinozaki K."/>
        </authorList>
    </citation>
    <scope>NUCLEOTIDE SEQUENCE [LARGE SCALE MRNA]</scope>
    <source>
        <strain>cv. Columbia</strain>
    </source>
</reference>
<reference key="4">
    <citation type="journal article" date="2003" name="Science">
        <title>Empirical analysis of transcriptional activity in the Arabidopsis genome.</title>
        <authorList>
            <person name="Yamada K."/>
            <person name="Lim J."/>
            <person name="Dale J.M."/>
            <person name="Chen H."/>
            <person name="Shinn P."/>
            <person name="Palm C.J."/>
            <person name="Southwick A.M."/>
            <person name="Wu H.C."/>
            <person name="Kim C.J."/>
            <person name="Nguyen M."/>
            <person name="Pham P.K."/>
            <person name="Cheuk R.F."/>
            <person name="Karlin-Newmann G."/>
            <person name="Liu S.X."/>
            <person name="Lam B."/>
            <person name="Sakano H."/>
            <person name="Wu T."/>
            <person name="Yu G."/>
            <person name="Miranda M."/>
            <person name="Quach H.L."/>
            <person name="Tripp M."/>
            <person name="Chang C.H."/>
            <person name="Lee J.M."/>
            <person name="Toriumi M.J."/>
            <person name="Chan M.M."/>
            <person name="Tang C.C."/>
            <person name="Onodera C.S."/>
            <person name="Deng J.M."/>
            <person name="Akiyama K."/>
            <person name="Ansari Y."/>
            <person name="Arakawa T."/>
            <person name="Banh J."/>
            <person name="Banno F."/>
            <person name="Bowser L."/>
            <person name="Brooks S.Y."/>
            <person name="Carninci P."/>
            <person name="Chao Q."/>
            <person name="Choy N."/>
            <person name="Enju A."/>
            <person name="Goldsmith A.D."/>
            <person name="Gurjal M."/>
            <person name="Hansen N.F."/>
            <person name="Hayashizaki Y."/>
            <person name="Johnson-Hopson C."/>
            <person name="Hsuan V.W."/>
            <person name="Iida K."/>
            <person name="Karnes M."/>
            <person name="Khan S."/>
            <person name="Koesema E."/>
            <person name="Ishida J."/>
            <person name="Jiang P.X."/>
            <person name="Jones T."/>
            <person name="Kawai J."/>
            <person name="Kamiya A."/>
            <person name="Meyers C."/>
            <person name="Nakajima M."/>
            <person name="Narusaka M."/>
            <person name="Seki M."/>
            <person name="Sakurai T."/>
            <person name="Satou M."/>
            <person name="Tamse R."/>
            <person name="Vaysberg M."/>
            <person name="Wallender E.K."/>
            <person name="Wong C."/>
            <person name="Yamamura Y."/>
            <person name="Yuan S."/>
            <person name="Shinozaki K."/>
            <person name="Davis R.W."/>
            <person name="Theologis A."/>
            <person name="Ecker J.R."/>
        </authorList>
    </citation>
    <scope>NUCLEOTIDE SEQUENCE [LARGE SCALE MRNA]</scope>
    <source>
        <strain>cv. Columbia</strain>
    </source>
</reference>
<reference key="5">
    <citation type="submission" date="2002-03" db="EMBL/GenBank/DDBJ databases">
        <title>Full-length cDNA from Arabidopsis thaliana.</title>
        <authorList>
            <person name="Brover V.V."/>
            <person name="Troukhan M.E."/>
            <person name="Alexandrov N.A."/>
            <person name="Lu Y.-P."/>
            <person name="Flavell R.B."/>
            <person name="Feldmann K.A."/>
        </authorList>
    </citation>
    <scope>NUCLEOTIDE SEQUENCE [LARGE SCALE MRNA]</scope>
</reference>
<reference key="6">
    <citation type="journal article" date="2003" name="Plant Physiol.">
        <title>Arabidopsis proteins containing similarity to the universal stress protein domain of bacteria.</title>
        <authorList>
            <person name="Kerk D."/>
            <person name="Bulgrien J."/>
            <person name="Smith D.W."/>
            <person name="Gribskov M."/>
        </authorList>
    </citation>
    <scope>IDENTIFICATION</scope>
</reference>
<reference key="7">
    <citation type="journal article" date="2008" name="J. Biol. Chem.">
        <title>An Arabidopsis protein phosphorylated in response to microbial elicitation, AtPHOS32, is a substrate of MAP kinases 3 and 6.</title>
        <authorList>
            <person name="Merkouropoulos G."/>
            <person name="Andreasson E."/>
            <person name="Hess D."/>
            <person name="Boller T."/>
            <person name="Peck S.C."/>
        </authorList>
    </citation>
    <scope>MUTAGENESIS OF SER-21</scope>
    <scope>PHOSPHORYLATION UPON BACTERIAL ELICITATION</scope>
    <scope>PHOSPHORYLATION AT SER-21 BY MAPK3 AND MAPK6</scope>
    <scope>NICKEL-BINDING</scope>
    <source>
        <strain>cv. Columbia</strain>
        <strain>cv. Landsberg erecta</strain>
    </source>
</reference>
<reference key="8">
    <citation type="journal article" date="2008" name="J. Proteome Res.">
        <title>Site-specific phosphorylation profiling of Arabidopsis proteins by mass spectrometry and peptide chip analysis.</title>
        <authorList>
            <person name="de la Fuente van Bentem S."/>
            <person name="Anrather D."/>
            <person name="Dohnal I."/>
            <person name="Roitinger E."/>
            <person name="Csaszar E."/>
            <person name="Joore J."/>
            <person name="Buijnink J."/>
            <person name="Carreri A."/>
            <person name="Forzani C."/>
            <person name="Lorkovic Z.J."/>
            <person name="Barta A."/>
            <person name="Lecourieux D."/>
            <person name="Verhounig A."/>
            <person name="Jonak C."/>
            <person name="Hirt H."/>
        </authorList>
    </citation>
    <scope>PHOSPHORYLATION [LARGE SCALE ANALYSIS] AT SER-21 AND SER-219</scope>
    <scope>IDENTIFICATION BY MASS SPECTROMETRY [LARGE SCALE ANALYSIS]</scope>
    <source>
        <tissue>Root</tissue>
    </source>
</reference>
<reference key="9">
    <citation type="journal article" date="2008" name="Mol. Plant Microbe Interact.">
        <title>Enrichment of phosphoproteins and phosphopeptide derivatization identify universal stress proteins in elicitor-treated Arabidopsis.</title>
        <authorList>
            <person name="Lenman M."/>
            <person name="Soerensson C."/>
            <person name="Andreasson E."/>
        </authorList>
    </citation>
    <scope>PHOSPHORYLATION UPON INFECTION BY PHYTOPHTHORA INFESTANS ZOOSPORES AND XYLANASE</scope>
    <scope>PHOSPHORYLATION AT SER-21</scope>
    <source>
        <strain>cv. Landsberg erecta</strain>
    </source>
</reference>
<reference key="10">
    <citation type="journal article" date="2009" name="Plant Physiol.">
        <title>Large-scale Arabidopsis phosphoproteome profiling reveals novel chloroplast kinase substrates and phosphorylation networks.</title>
        <authorList>
            <person name="Reiland S."/>
            <person name="Messerli G."/>
            <person name="Baerenfaller K."/>
            <person name="Gerrits B."/>
            <person name="Endler A."/>
            <person name="Grossmann J."/>
            <person name="Gruissem W."/>
            <person name="Baginsky S."/>
        </authorList>
    </citation>
    <scope>PHOSPHORYLATION [LARGE SCALE ANALYSIS] AT SER-21</scope>
    <scope>IDENTIFICATION BY MASS SPECTROMETRY [LARGE SCALE ANALYSIS]</scope>
</reference>
<reference key="11">
    <citation type="journal article" date="2012" name="Mol. Cell. Proteomics">
        <title>Comparative large-scale characterisation of plant vs. mammal proteins reveals similar and idiosyncratic N-alpha acetylation features.</title>
        <authorList>
            <person name="Bienvenut W.V."/>
            <person name="Sumpton D."/>
            <person name="Martinez A."/>
            <person name="Lilla S."/>
            <person name="Espagne C."/>
            <person name="Meinnel T."/>
            <person name="Giglione C."/>
        </authorList>
    </citation>
    <scope>IDENTIFICATION BY MASS SPECTROMETRY [LARGE SCALE ANALYSIS]</scope>
</reference>
<proteinExistence type="evidence at protein level"/>
<sequence length="242" mass="26202">MNPADSDHPQLPNIKIHHPPSPRHSHHHHSSSTPSSAATPTPTAGARRKIGVAVDLSEESSFAVRWAVDHYIRPGDAVVLLHVSPTSVLFGADWGPLPLKTQIEDPNAQPQPSQEDFDAFTSTKVADLAKPLKELGFPYKIHIVKDHDMRERLCLEIERLGLSAVIMGSRGFGAEKKRGSDGKLGSVSDYCVHHCVCPVVVVRYPDDRDGPVPIVTVKSGGDDDGDVVAASASAHHEHIKDE</sequence>
<name>PHO32_ARATH</name>